<feature type="chain" id="PRO_1000072661" description="Nucleotide-binding protein Asuc_2113">
    <location>
        <begin position="1"/>
        <end position="163"/>
    </location>
</feature>
<keyword id="KW-0547">Nucleotide-binding</keyword>
<keyword id="KW-1185">Reference proteome</keyword>
<gene>
    <name type="ordered locus">Asuc_2113</name>
</gene>
<sequence length="163" mass="18345">MPSFDIVSEITMHEVNNAVENANRALSSRYDFRGVEAVIELNEKNETVKVTTESDFQLEQLIEILIGACVKRGIDSTSLDIPAESEHHGKLYSKEIKLKQGIETEIAKKITKLIKDSKLKVQTQIQGEQVRVTGKSRDDLQSVIQLVKGADLGQPFQFNNFRD</sequence>
<proteinExistence type="inferred from homology"/>
<comment type="function">
    <text evidence="1">Nucleotide-binding protein.</text>
</comment>
<comment type="similarity">
    <text evidence="1">Belongs to the YajQ family.</text>
</comment>
<reference key="1">
    <citation type="journal article" date="2010" name="BMC Genomics">
        <title>A genomic perspective on the potential of Actinobacillus succinogenes for industrial succinate production.</title>
        <authorList>
            <person name="McKinlay J.B."/>
            <person name="Laivenieks M."/>
            <person name="Schindler B.D."/>
            <person name="McKinlay A.A."/>
            <person name="Siddaramappa S."/>
            <person name="Challacombe J.F."/>
            <person name="Lowry S.R."/>
            <person name="Clum A."/>
            <person name="Lapidus A.L."/>
            <person name="Burkhart K.B."/>
            <person name="Harkins V."/>
            <person name="Vieille C."/>
        </authorList>
    </citation>
    <scope>NUCLEOTIDE SEQUENCE [LARGE SCALE GENOMIC DNA]</scope>
    <source>
        <strain>ATCC 55618 / DSM 22257 / CCUG 43843 / 130Z</strain>
    </source>
</reference>
<evidence type="ECO:0000255" key="1">
    <source>
        <dbReference type="HAMAP-Rule" id="MF_00632"/>
    </source>
</evidence>
<dbReference type="EMBL" id="CP000746">
    <property type="protein sequence ID" value="ABR75457.1"/>
    <property type="molecule type" value="Genomic_DNA"/>
</dbReference>
<dbReference type="RefSeq" id="WP_012073833.1">
    <property type="nucleotide sequence ID" value="NC_009655.1"/>
</dbReference>
<dbReference type="SMR" id="A6VR60"/>
<dbReference type="STRING" id="339671.Asuc_2113"/>
<dbReference type="KEGG" id="asu:Asuc_2113"/>
<dbReference type="eggNOG" id="COG1666">
    <property type="taxonomic scope" value="Bacteria"/>
</dbReference>
<dbReference type="HOGENOM" id="CLU_099839_1_0_6"/>
<dbReference type="OrthoDB" id="9801447at2"/>
<dbReference type="Proteomes" id="UP000001114">
    <property type="component" value="Chromosome"/>
</dbReference>
<dbReference type="GO" id="GO:0005829">
    <property type="term" value="C:cytosol"/>
    <property type="evidence" value="ECO:0007669"/>
    <property type="project" value="TreeGrafter"/>
</dbReference>
<dbReference type="GO" id="GO:0000166">
    <property type="term" value="F:nucleotide binding"/>
    <property type="evidence" value="ECO:0007669"/>
    <property type="project" value="TreeGrafter"/>
</dbReference>
<dbReference type="CDD" id="cd11740">
    <property type="entry name" value="YajQ_like"/>
    <property type="match status" value="1"/>
</dbReference>
<dbReference type="FunFam" id="3.30.70.860:FF:000001">
    <property type="entry name" value="UPF0234 protein YajQ"/>
    <property type="match status" value="1"/>
</dbReference>
<dbReference type="FunFam" id="3.30.70.990:FF:000001">
    <property type="entry name" value="UPF0234 protein YajQ"/>
    <property type="match status" value="1"/>
</dbReference>
<dbReference type="Gene3D" id="3.30.70.860">
    <property type="match status" value="1"/>
</dbReference>
<dbReference type="Gene3D" id="3.30.70.990">
    <property type="entry name" value="YajQ-like, domain 2"/>
    <property type="match status" value="1"/>
</dbReference>
<dbReference type="HAMAP" id="MF_00632">
    <property type="entry name" value="YajQ"/>
    <property type="match status" value="1"/>
</dbReference>
<dbReference type="InterPro" id="IPR007551">
    <property type="entry name" value="DUF520"/>
</dbReference>
<dbReference type="InterPro" id="IPR035571">
    <property type="entry name" value="UPF0234-like_C"/>
</dbReference>
<dbReference type="InterPro" id="IPR035570">
    <property type="entry name" value="UPF0234_N"/>
</dbReference>
<dbReference type="InterPro" id="IPR036183">
    <property type="entry name" value="YajQ-like_sf"/>
</dbReference>
<dbReference type="NCBIfam" id="NF003819">
    <property type="entry name" value="PRK05412.1"/>
    <property type="match status" value="1"/>
</dbReference>
<dbReference type="PANTHER" id="PTHR30476">
    <property type="entry name" value="UPF0234 PROTEIN YAJQ"/>
    <property type="match status" value="1"/>
</dbReference>
<dbReference type="PANTHER" id="PTHR30476:SF0">
    <property type="entry name" value="UPF0234 PROTEIN YAJQ"/>
    <property type="match status" value="1"/>
</dbReference>
<dbReference type="Pfam" id="PF04461">
    <property type="entry name" value="DUF520"/>
    <property type="match status" value="1"/>
</dbReference>
<dbReference type="SUPFAM" id="SSF89963">
    <property type="entry name" value="YajQ-like"/>
    <property type="match status" value="2"/>
</dbReference>
<protein>
    <recommendedName>
        <fullName evidence="1">Nucleotide-binding protein Asuc_2113</fullName>
    </recommendedName>
</protein>
<organism>
    <name type="scientific">Actinobacillus succinogenes (strain ATCC 55618 / DSM 22257 / CCUG 43843 / 130Z)</name>
    <dbReference type="NCBI Taxonomy" id="339671"/>
    <lineage>
        <taxon>Bacteria</taxon>
        <taxon>Pseudomonadati</taxon>
        <taxon>Pseudomonadota</taxon>
        <taxon>Gammaproteobacteria</taxon>
        <taxon>Pasteurellales</taxon>
        <taxon>Pasteurellaceae</taxon>
        <taxon>Actinobacillus</taxon>
    </lineage>
</organism>
<accession>A6VR60</accession>
<name>Y2113_ACTSZ</name>